<evidence type="ECO:0000255" key="1">
    <source>
        <dbReference type="HAMAP-Rule" id="MF_02004"/>
    </source>
</evidence>
<protein>
    <recommendedName>
        <fullName evidence="1">Valine--tRNA ligase</fullName>
        <ecNumber evidence="1">6.1.1.9</ecNumber>
    </recommendedName>
    <alternativeName>
        <fullName evidence="1">Valyl-tRNA synthetase</fullName>
        <shortName evidence="1">ValRS</shortName>
    </alternativeName>
</protein>
<dbReference type="EC" id="6.1.1.9" evidence="1"/>
<dbReference type="EMBL" id="BA000033">
    <property type="protein sequence ID" value="BAB95472.1"/>
    <property type="molecule type" value="Genomic_DNA"/>
</dbReference>
<dbReference type="RefSeq" id="WP_000425353.1">
    <property type="nucleotide sequence ID" value="NC_003923.1"/>
</dbReference>
<dbReference type="SMR" id="Q7A0P4"/>
<dbReference type="KEGG" id="sam:MW1607"/>
<dbReference type="HOGENOM" id="CLU_001493_0_2_9"/>
<dbReference type="GO" id="GO:0005829">
    <property type="term" value="C:cytosol"/>
    <property type="evidence" value="ECO:0007669"/>
    <property type="project" value="TreeGrafter"/>
</dbReference>
<dbReference type="GO" id="GO:0002161">
    <property type="term" value="F:aminoacyl-tRNA deacylase activity"/>
    <property type="evidence" value="ECO:0007669"/>
    <property type="project" value="InterPro"/>
</dbReference>
<dbReference type="GO" id="GO:0005524">
    <property type="term" value="F:ATP binding"/>
    <property type="evidence" value="ECO:0007669"/>
    <property type="project" value="UniProtKB-UniRule"/>
</dbReference>
<dbReference type="GO" id="GO:0004832">
    <property type="term" value="F:valine-tRNA ligase activity"/>
    <property type="evidence" value="ECO:0007669"/>
    <property type="project" value="UniProtKB-UniRule"/>
</dbReference>
<dbReference type="GO" id="GO:0006438">
    <property type="term" value="P:valyl-tRNA aminoacylation"/>
    <property type="evidence" value="ECO:0007669"/>
    <property type="project" value="UniProtKB-UniRule"/>
</dbReference>
<dbReference type="CDD" id="cd07962">
    <property type="entry name" value="Anticodon_Ia_Val"/>
    <property type="match status" value="1"/>
</dbReference>
<dbReference type="CDD" id="cd00817">
    <property type="entry name" value="ValRS_core"/>
    <property type="match status" value="1"/>
</dbReference>
<dbReference type="FunFam" id="1.10.287.380:FF:000001">
    <property type="entry name" value="Valine--tRNA ligase"/>
    <property type="match status" value="1"/>
</dbReference>
<dbReference type="FunFam" id="1.10.730.10:FF:000014">
    <property type="entry name" value="Valine--tRNA ligase"/>
    <property type="match status" value="1"/>
</dbReference>
<dbReference type="FunFam" id="3.40.50.620:FF:000032">
    <property type="entry name" value="Valine--tRNA ligase"/>
    <property type="match status" value="1"/>
</dbReference>
<dbReference type="FunFam" id="3.40.50.620:FF:000098">
    <property type="entry name" value="Valine--tRNA ligase"/>
    <property type="match status" value="1"/>
</dbReference>
<dbReference type="FunFam" id="3.90.740.10:FF:000005">
    <property type="entry name" value="Valine--tRNA ligase, mitochondrial"/>
    <property type="match status" value="1"/>
</dbReference>
<dbReference type="Gene3D" id="3.40.50.620">
    <property type="entry name" value="HUPs"/>
    <property type="match status" value="2"/>
</dbReference>
<dbReference type="Gene3D" id="1.10.730.10">
    <property type="entry name" value="Isoleucyl-tRNA Synthetase, Domain 1"/>
    <property type="match status" value="1"/>
</dbReference>
<dbReference type="Gene3D" id="1.10.287.380">
    <property type="entry name" value="Valyl-tRNA synthetase, C-terminal domain"/>
    <property type="match status" value="1"/>
</dbReference>
<dbReference type="Gene3D" id="3.90.740.10">
    <property type="entry name" value="Valyl/Leucyl/Isoleucyl-tRNA synthetase, editing domain"/>
    <property type="match status" value="1"/>
</dbReference>
<dbReference type="HAMAP" id="MF_02004">
    <property type="entry name" value="Val_tRNA_synth_type1"/>
    <property type="match status" value="1"/>
</dbReference>
<dbReference type="InterPro" id="IPR001412">
    <property type="entry name" value="aa-tRNA-synth_I_CS"/>
</dbReference>
<dbReference type="InterPro" id="IPR002300">
    <property type="entry name" value="aa-tRNA-synth_Ia"/>
</dbReference>
<dbReference type="InterPro" id="IPR033705">
    <property type="entry name" value="Anticodon_Ia_Val"/>
</dbReference>
<dbReference type="InterPro" id="IPR013155">
    <property type="entry name" value="M/V/L/I-tRNA-synth_anticd-bd"/>
</dbReference>
<dbReference type="InterPro" id="IPR014729">
    <property type="entry name" value="Rossmann-like_a/b/a_fold"/>
</dbReference>
<dbReference type="InterPro" id="IPR010978">
    <property type="entry name" value="tRNA-bd_arm"/>
</dbReference>
<dbReference type="InterPro" id="IPR009080">
    <property type="entry name" value="tRNAsynth_Ia_anticodon-bd"/>
</dbReference>
<dbReference type="InterPro" id="IPR037118">
    <property type="entry name" value="Val-tRNA_synth_C_sf"/>
</dbReference>
<dbReference type="InterPro" id="IPR019499">
    <property type="entry name" value="Val-tRNA_synth_tRNA-bd"/>
</dbReference>
<dbReference type="InterPro" id="IPR009008">
    <property type="entry name" value="Val/Leu/Ile-tRNA-synth_edit"/>
</dbReference>
<dbReference type="InterPro" id="IPR002303">
    <property type="entry name" value="Valyl-tRNA_ligase"/>
</dbReference>
<dbReference type="NCBIfam" id="NF004349">
    <property type="entry name" value="PRK05729.1"/>
    <property type="match status" value="1"/>
</dbReference>
<dbReference type="NCBIfam" id="TIGR00422">
    <property type="entry name" value="valS"/>
    <property type="match status" value="1"/>
</dbReference>
<dbReference type="PANTHER" id="PTHR11946:SF93">
    <property type="entry name" value="VALINE--TRNA LIGASE, CHLOROPLASTIC_MITOCHONDRIAL 2"/>
    <property type="match status" value="1"/>
</dbReference>
<dbReference type="PANTHER" id="PTHR11946">
    <property type="entry name" value="VALYL-TRNA SYNTHETASES"/>
    <property type="match status" value="1"/>
</dbReference>
<dbReference type="Pfam" id="PF08264">
    <property type="entry name" value="Anticodon_1"/>
    <property type="match status" value="1"/>
</dbReference>
<dbReference type="Pfam" id="PF00133">
    <property type="entry name" value="tRNA-synt_1"/>
    <property type="match status" value="1"/>
</dbReference>
<dbReference type="Pfam" id="PF10458">
    <property type="entry name" value="Val_tRNA-synt_C"/>
    <property type="match status" value="1"/>
</dbReference>
<dbReference type="PRINTS" id="PR00986">
    <property type="entry name" value="TRNASYNTHVAL"/>
</dbReference>
<dbReference type="SUPFAM" id="SSF47323">
    <property type="entry name" value="Anticodon-binding domain of a subclass of class I aminoacyl-tRNA synthetases"/>
    <property type="match status" value="1"/>
</dbReference>
<dbReference type="SUPFAM" id="SSF52374">
    <property type="entry name" value="Nucleotidylyl transferase"/>
    <property type="match status" value="1"/>
</dbReference>
<dbReference type="SUPFAM" id="SSF46589">
    <property type="entry name" value="tRNA-binding arm"/>
    <property type="match status" value="1"/>
</dbReference>
<dbReference type="SUPFAM" id="SSF50677">
    <property type="entry name" value="ValRS/IleRS/LeuRS editing domain"/>
    <property type="match status" value="1"/>
</dbReference>
<dbReference type="PROSITE" id="PS00178">
    <property type="entry name" value="AA_TRNA_LIGASE_I"/>
    <property type="match status" value="1"/>
</dbReference>
<gene>
    <name evidence="1" type="primary">valS</name>
    <name type="ordered locus">MW1607</name>
</gene>
<name>SYV_STAAW</name>
<keyword id="KW-0030">Aminoacyl-tRNA synthetase</keyword>
<keyword id="KW-0067">ATP-binding</keyword>
<keyword id="KW-0175">Coiled coil</keyword>
<keyword id="KW-0963">Cytoplasm</keyword>
<keyword id="KW-0436">Ligase</keyword>
<keyword id="KW-0547">Nucleotide-binding</keyword>
<keyword id="KW-0648">Protein biosynthesis</keyword>
<feature type="chain" id="PRO_0000224564" description="Valine--tRNA ligase">
    <location>
        <begin position="1"/>
        <end position="876"/>
    </location>
</feature>
<feature type="coiled-coil region" evidence="1">
    <location>
        <begin position="805"/>
        <end position="876"/>
    </location>
</feature>
<feature type="short sequence motif" description="'HIGH' region">
    <location>
        <begin position="44"/>
        <end position="54"/>
    </location>
</feature>
<feature type="short sequence motif" description="'KMSKS' region">
    <location>
        <begin position="520"/>
        <end position="524"/>
    </location>
</feature>
<feature type="binding site" evidence="1">
    <location>
        <position position="523"/>
    </location>
    <ligand>
        <name>ATP</name>
        <dbReference type="ChEBI" id="CHEBI:30616"/>
    </ligand>
</feature>
<reference key="1">
    <citation type="journal article" date="2002" name="Lancet">
        <title>Genome and virulence determinants of high virulence community-acquired MRSA.</title>
        <authorList>
            <person name="Baba T."/>
            <person name="Takeuchi F."/>
            <person name="Kuroda M."/>
            <person name="Yuzawa H."/>
            <person name="Aoki K."/>
            <person name="Oguchi A."/>
            <person name="Nagai Y."/>
            <person name="Iwama N."/>
            <person name="Asano K."/>
            <person name="Naimi T."/>
            <person name="Kuroda H."/>
            <person name="Cui L."/>
            <person name="Yamamoto K."/>
            <person name="Hiramatsu K."/>
        </authorList>
    </citation>
    <scope>NUCLEOTIDE SEQUENCE [LARGE SCALE GENOMIC DNA]</scope>
    <source>
        <strain>MW2</strain>
    </source>
</reference>
<accession>Q7A0P4</accession>
<organism>
    <name type="scientific">Staphylococcus aureus (strain MW2)</name>
    <dbReference type="NCBI Taxonomy" id="196620"/>
    <lineage>
        <taxon>Bacteria</taxon>
        <taxon>Bacillati</taxon>
        <taxon>Bacillota</taxon>
        <taxon>Bacilli</taxon>
        <taxon>Bacillales</taxon>
        <taxon>Staphylococcaceae</taxon>
        <taxon>Staphylococcus</taxon>
    </lineage>
</organism>
<sequence length="876" mass="101724">MEMKPKYDPREVEAGRYEEWVKNGYFKPSEDKSKETYTIVIPPPNVTGKLHLGHAWDTTLQDIITRMKRMQGYDTLYLPGMDHAGIATQAKVEAKLNEQGITRYDLGREKFLEQAWDWKEEYASFIRAQWAKLGLGLDYSRERFTLDEGLSKAVKKVFVDLYNKGIIYRGERIINWDPKARTALSDIEVIHEDVQGAFYHFKYPYADGEGFIEIATTRPETMLGDTAIVVNPNDERYKDVIGKTVILPIVGRELPILADEYVDIDFGSGAMKVTPAHDPNDFEIGQRHQLENIIVMDENGKMNDKAGKYEGMDRFDCRKQLVKDLKEQDLVIKIEDHVHSVGHSERSGAVVEPYLSTQWFVRMEDLAKRSLDNQKTDDRIDFYPQRFEHTFNQWMENIRDWTISRQLWWGHQIPAWYHKETGEIYVGEEAPTDIENWQQDEDVLDTWFSSALWPFSTLGWPDLESEDFKRYYPTNALVTGYDIIFFWVARMIFQGLEFTDRRPFNDVLLHGLVRAEDGRKMSKSLGNGVDPMDVIDEYGADSLRYFLATGSSPGHDLRYSTEKVESVWNFINKIWNGARFSLMNIGEDFKVEDIDLSGNLSLADKWILTRLNETIATVTDLSDKYEFGEVGRALYNFIWDDFCDWYIEMSKIPMNSNDEEQKQVTRSVLSYTLDNIMRMLHPFMPFVTEKIWQSLPHEGDTIVKASWPEVRESLIFEESKQTMQQLVEIIKSVRQSRVEVNTPLSKEIPILIQAKDKEIETTLSQNKDYLIKFCNPSTLNISTDVEIPEKAMTSVVIAGKVVLPLEGLIDMDKEISRLEKELAKLQSELDRVDKKLSNENFVSKAPEKVINEEKRKKQDYQEKYDGVKARIEQLKA</sequence>
<comment type="function">
    <text evidence="1">Catalyzes the attachment of valine to tRNA(Val). As ValRS can inadvertently accommodate and process structurally similar amino acids such as threonine, to avoid such errors, it has a 'posttransfer' editing activity that hydrolyzes mischarged Thr-tRNA(Val) in a tRNA-dependent manner.</text>
</comment>
<comment type="catalytic activity">
    <reaction evidence="1">
        <text>tRNA(Val) + L-valine + ATP = L-valyl-tRNA(Val) + AMP + diphosphate</text>
        <dbReference type="Rhea" id="RHEA:10704"/>
        <dbReference type="Rhea" id="RHEA-COMP:9672"/>
        <dbReference type="Rhea" id="RHEA-COMP:9708"/>
        <dbReference type="ChEBI" id="CHEBI:30616"/>
        <dbReference type="ChEBI" id="CHEBI:33019"/>
        <dbReference type="ChEBI" id="CHEBI:57762"/>
        <dbReference type="ChEBI" id="CHEBI:78442"/>
        <dbReference type="ChEBI" id="CHEBI:78537"/>
        <dbReference type="ChEBI" id="CHEBI:456215"/>
        <dbReference type="EC" id="6.1.1.9"/>
    </reaction>
</comment>
<comment type="subunit">
    <text evidence="1">Monomer.</text>
</comment>
<comment type="subcellular location">
    <subcellularLocation>
        <location evidence="1">Cytoplasm</location>
    </subcellularLocation>
</comment>
<comment type="domain">
    <text evidence="1">ValRS has two distinct active sites: one for aminoacylation and one for editing. The misactivated threonine is translocated from the active site to the editing site.</text>
</comment>
<comment type="domain">
    <text evidence="1">The C-terminal coiled-coil domain is crucial for aminoacylation activity.</text>
</comment>
<comment type="similarity">
    <text evidence="1">Belongs to the class-I aminoacyl-tRNA synthetase family. ValS type 1 subfamily.</text>
</comment>
<proteinExistence type="inferred from homology"/>